<organismHost>
    <name type="scientific">Aves</name>
    <dbReference type="NCBI Taxonomy" id="8782"/>
</organismHost>
<organismHost>
    <name type="scientific">Homo sapiens</name>
    <name type="common">Human</name>
    <dbReference type="NCBI Taxonomy" id="9606"/>
</organismHost>
<name>NS1_I57A0</name>
<proteinExistence type="inferred from homology"/>
<organism>
    <name type="scientific">Influenza A virus (strain A/Japan/305/1957 H2N2)</name>
    <dbReference type="NCBI Taxonomy" id="387161"/>
    <lineage>
        <taxon>Viruses</taxon>
        <taxon>Riboviria</taxon>
        <taxon>Orthornavirae</taxon>
        <taxon>Negarnaviricota</taxon>
        <taxon>Polyploviricotina</taxon>
        <taxon>Insthoviricetes</taxon>
        <taxon>Articulavirales</taxon>
        <taxon>Orthomyxoviridae</taxon>
        <taxon>Alphainfluenzavirus</taxon>
        <taxon>Alphainfluenzavirus influenzae</taxon>
        <taxon>Influenza A virus</taxon>
    </lineage>
</organism>
<evidence type="ECO:0000255" key="1">
    <source>
        <dbReference type="HAMAP-Rule" id="MF_04066"/>
    </source>
</evidence>
<evidence type="ECO:0000256" key="2">
    <source>
        <dbReference type="SAM" id="MobiDB-lite"/>
    </source>
</evidence>
<feature type="chain" id="PRO_0000324240" description="Non-structural protein 1">
    <location>
        <begin position="1"/>
        <end position="237"/>
    </location>
</feature>
<feature type="region of interest" description="RNA-binding and homodimerization" evidence="1">
    <location>
        <begin position="1"/>
        <end position="73"/>
    </location>
</feature>
<feature type="region of interest" description="CPSF4-binding" evidence="1">
    <location>
        <begin position="180"/>
        <end position="215"/>
    </location>
</feature>
<feature type="region of interest" description="Disordered" evidence="2">
    <location>
        <begin position="205"/>
        <end position="237"/>
    </location>
</feature>
<feature type="region of interest" description="PABPN1-binding" evidence="1">
    <location>
        <begin position="223"/>
        <end position="230"/>
    </location>
</feature>
<feature type="short sequence motif" description="Nuclear localization signal" evidence="1">
    <location>
        <begin position="34"/>
        <end position="38"/>
    </location>
</feature>
<feature type="short sequence motif" description="Nuclear export signal" evidence="1">
    <location>
        <begin position="137"/>
        <end position="146"/>
    </location>
</feature>
<feature type="compositionally biased region" description="Basic residues" evidence="2">
    <location>
        <begin position="217"/>
        <end position="237"/>
    </location>
</feature>
<protein>
    <recommendedName>
        <fullName evidence="1">Non-structural protein 1</fullName>
        <shortName evidence="1">NS1</shortName>
    </recommendedName>
    <alternativeName>
        <fullName evidence="1">NS1A</fullName>
    </alternativeName>
</protein>
<gene>
    <name evidence="1" type="primary">NS</name>
</gene>
<accession>Q1K9P7</accession>
<dbReference type="EMBL" id="DQ508845">
    <property type="protein sequence ID" value="ABF21202.1"/>
    <property type="molecule type" value="Genomic_RNA"/>
</dbReference>
<dbReference type="SMR" id="Q1K9P7"/>
<dbReference type="Proteomes" id="UP000118104">
    <property type="component" value="Genome"/>
</dbReference>
<dbReference type="GO" id="GO:0030430">
    <property type="term" value="C:host cell cytoplasm"/>
    <property type="evidence" value="ECO:0007669"/>
    <property type="project" value="UniProtKB-SubCell"/>
</dbReference>
<dbReference type="GO" id="GO:0042025">
    <property type="term" value="C:host cell nucleus"/>
    <property type="evidence" value="ECO:0007669"/>
    <property type="project" value="UniProtKB-SubCell"/>
</dbReference>
<dbReference type="GO" id="GO:0030291">
    <property type="term" value="F:protein serine/threonine kinase inhibitor activity"/>
    <property type="evidence" value="ECO:0007669"/>
    <property type="project" value="UniProtKB-KW"/>
</dbReference>
<dbReference type="GO" id="GO:0003723">
    <property type="term" value="F:RNA binding"/>
    <property type="evidence" value="ECO:0007669"/>
    <property type="project" value="UniProtKB-KW"/>
</dbReference>
<dbReference type="GO" id="GO:0039540">
    <property type="term" value="P:symbiont-mediated suppression of host cytoplasmic pattern recognition receptor signaling pathway via inhibition of RIG-I activity"/>
    <property type="evidence" value="ECO:0007669"/>
    <property type="project" value="UniProtKB-KW"/>
</dbReference>
<dbReference type="GO" id="GO:0039657">
    <property type="term" value="P:symbiont-mediated suppression of host gene expression"/>
    <property type="evidence" value="ECO:0007669"/>
    <property type="project" value="UniProtKB-KW"/>
</dbReference>
<dbReference type="GO" id="GO:0039524">
    <property type="term" value="P:symbiont-mediated suppression of host mRNA processing"/>
    <property type="evidence" value="ECO:0007669"/>
    <property type="project" value="UniProtKB-KW"/>
</dbReference>
<dbReference type="GO" id="GO:0039580">
    <property type="term" value="P:symbiont-mediated suppression of host PKR/eIFalpha signaling"/>
    <property type="evidence" value="ECO:0007669"/>
    <property type="project" value="UniProtKB-KW"/>
</dbReference>
<dbReference type="GO" id="GO:0039502">
    <property type="term" value="P:symbiont-mediated suppression of host type I interferon-mediated signaling pathway"/>
    <property type="evidence" value="ECO:0007669"/>
    <property type="project" value="UniProtKB-KW"/>
</dbReference>
<dbReference type="FunFam" id="1.10.287.10:FF:000001">
    <property type="entry name" value="Non-structural protein 1"/>
    <property type="match status" value="1"/>
</dbReference>
<dbReference type="FunFam" id="3.30.420.330:FF:000001">
    <property type="entry name" value="Non-structural protein 1"/>
    <property type="match status" value="1"/>
</dbReference>
<dbReference type="Gene3D" id="3.30.420.330">
    <property type="entry name" value="Influenza virus non-structural protein, effector domain"/>
    <property type="match status" value="1"/>
</dbReference>
<dbReference type="Gene3D" id="1.10.287.10">
    <property type="entry name" value="S15/NS1, RNA-binding"/>
    <property type="match status" value="1"/>
</dbReference>
<dbReference type="HAMAP" id="MF_04066">
    <property type="entry name" value="INFV_NS1"/>
    <property type="match status" value="1"/>
</dbReference>
<dbReference type="InterPro" id="IPR004208">
    <property type="entry name" value="NS1"/>
</dbReference>
<dbReference type="InterPro" id="IPR000256">
    <property type="entry name" value="NS1A"/>
</dbReference>
<dbReference type="InterPro" id="IPR038064">
    <property type="entry name" value="NS1A_effect_dom-like_sf"/>
</dbReference>
<dbReference type="InterPro" id="IPR009068">
    <property type="entry name" value="uS15_NS1_RNA-bd_sf"/>
</dbReference>
<dbReference type="Pfam" id="PF00600">
    <property type="entry name" value="Flu_NS1"/>
    <property type="match status" value="1"/>
</dbReference>
<dbReference type="SUPFAM" id="SSF143021">
    <property type="entry name" value="Ns1 effector domain-like"/>
    <property type="match status" value="1"/>
</dbReference>
<dbReference type="SUPFAM" id="SSF47060">
    <property type="entry name" value="S15/NS1 RNA-binding domain"/>
    <property type="match status" value="1"/>
</dbReference>
<reference key="1">
    <citation type="submission" date="2006-04" db="EMBL/GenBank/DDBJ databases">
        <title>Complete genome sequencing and analysis of selected Influenza Virus vaccine strains spanning six decades (1933-1999).</title>
        <authorList>
            <person name="Mbawuike I.N."/>
            <person name="Zhang Y."/>
            <person name="Yamada R.E."/>
            <person name="Nino D."/>
            <person name="Bui H.-H."/>
            <person name="Sette A."/>
            <person name="Couch R.B."/>
        </authorList>
    </citation>
    <scope>NUCLEOTIDE SEQUENCE [GENOMIC RNA]</scope>
</reference>
<comment type="function">
    <text evidence="1">Inhibits post-transcriptional processing of cellular pre-mRNA, by binding and inhibiting two cellular proteins that are required for the 3'-end processing of cellular pre-mRNAs: the 30 kDa cleavage and polyadenylation specificity factor/CPSF4 and the poly(A)-binding protein 2/PABPN1. In turn, unprocessed 3' end pre-mRNAs accumulate in the host nucleus and are no longer exported to the cytoplasm. Cellular protein synthesis is thereby shut off very early after virus infection. Viral protein synthesis is not affected by the inhibition of the cellular 3' end processing machinery because the poly(A) tails of viral mRNAs are produced by the viral polymerase through a stuttering mechanism. Prevents the establishment of the cellular antiviral state by inhibiting TRIM25-mediated RIGI ubiquitination, which normally triggers the antiviral transduction signal that leads to the activation of type I IFN genes by transcription factors IRF3 and IRF7. Also binds poly(A) and U6 snRNA. Inhibits the integrated stress response (ISR) in the infected cell by blocking dsRNA binding by EIF2AK2/PKR and further phosphorylation of EIF2S1/EIF-2ALPHA. Stress granule formation is thus inhibited, which allows protein synthesis and viral replication.</text>
</comment>
<comment type="subunit">
    <text evidence="1">Homodimer. Interacts with host TRIM25 (via coiled coil); this interaction specifically inhibits TRIM25 multimerization and TRIM25-mediated RIGI CARD ubiquitination. Interacts with human EIF2AK2/PKR, CPSF4, IVNS1ABP and PABPN1.</text>
</comment>
<comment type="subcellular location">
    <subcellularLocation>
        <location evidence="1">Host nucleus</location>
    </subcellularLocation>
    <subcellularLocation>
        <location evidence="1">Host cytoplasm</location>
    </subcellularLocation>
    <text evidence="1">In uninfected, transfected cells, NS1 is localized in the nucleus. Only in virus infected cells, the nuclear export signal is unveiled, presumably by a viral protein, and a fraction of NS1 is exported in the cytoplasm.</text>
</comment>
<comment type="alternative products">
    <event type="alternative splicing"/>
    <isoform>
        <id>Q1K9P7-1</id>
        <name>NS1</name>
        <sequence type="displayed"/>
    </isoform>
    <isoform>
        <id>Q1K9P8-1</id>
        <name>NEP</name>
        <name>NS2</name>
        <sequence type="external"/>
    </isoform>
</comment>
<comment type="domain">
    <text evidence="1">The dsRNA-binding region is required for suppression of RNA silencing.</text>
</comment>
<comment type="PTM">
    <text evidence="1">Upon interferon induction, ISGylated via host HERC5; this results in the impairment of NS1 interaction with RNA targets due to its inability to form homodimers and to interact with host EIF2AK2/PKR.</text>
</comment>
<comment type="similarity">
    <text evidence="1">Belongs to the influenza A viruses NS1 family.</text>
</comment>
<sequence>MDPNTVSSFQVDCFLWHVRKQVADQELGDAPFLDRLRRDQKSLRRRGSTLGLNIETATRVGKQIVERILKEESDEALKMTMASAPASRYLTDMTIEEMSRDWFMLMPKQKVAGPLCIRMDQAIMDKNIILKANFSVIFDRLETLILLRAFTEEGAIVGEISPLPSLPGHTNEDVKNAIGVLIGGLEWNDNTVRVSKTLQRFAWRSSNENGRPPLTPKQKRKMARTIRSKVRRNKMAD</sequence>
<keyword id="KW-0025">Alternative splicing</keyword>
<keyword id="KW-1262">Eukaryotic host gene expression shutoff by virus</keyword>
<keyword id="KW-1035">Host cytoplasm</keyword>
<keyword id="KW-1190">Host gene expression shutoff by virus</keyword>
<keyword id="KW-1192">Host mRNA suppression by virus</keyword>
<keyword id="KW-1048">Host nucleus</keyword>
<keyword id="KW-0945">Host-virus interaction</keyword>
<keyword id="KW-1090">Inhibition of host innate immune response by virus</keyword>
<keyword id="KW-1114">Inhibition of host interferon signaling pathway by virus</keyword>
<keyword id="KW-1102">Inhibition of host PKR by virus</keyword>
<keyword id="KW-1103">Inhibition of host pre-mRNA processing by virus</keyword>
<keyword id="KW-1088">Inhibition of host RIG-I by virus</keyword>
<keyword id="KW-1113">Inhibition of host RLR pathway by virus</keyword>
<keyword id="KW-0922">Interferon antiviral system evasion</keyword>
<keyword id="KW-0694">RNA-binding</keyword>
<keyword id="KW-0832">Ubl conjugation</keyword>
<keyword id="KW-0899">Viral immunoevasion</keyword>